<evidence type="ECO:0000250" key="1"/>
<evidence type="ECO:0000255" key="2"/>
<evidence type="ECO:0000305" key="3"/>
<gene>
    <name type="ordered locus">At1g25270</name>
    <name type="ORF">F4F7.34</name>
</gene>
<comment type="subcellular location">
    <subcellularLocation>
        <location evidence="1">Membrane</location>
        <topology evidence="3">Multi-pass membrane protein</topology>
    </subcellularLocation>
</comment>
<comment type="similarity">
    <text evidence="3">Belongs to the drug/metabolite transporter (DMT) superfamily. Plant drug/metabolite exporter (P-DME) (TC 2.A.7.4) family.</text>
</comment>
<comment type="sequence caution" evidence="3">
    <conflict type="erroneous gene model prediction">
        <sequence resource="EMBL-CDS" id="AAG40088"/>
    </conflict>
</comment>
<protein>
    <recommendedName>
        <fullName>WAT1-related protein At1g25270</fullName>
    </recommendedName>
</protein>
<keyword id="KW-0472">Membrane</keyword>
<keyword id="KW-1185">Reference proteome</keyword>
<keyword id="KW-0677">Repeat</keyword>
<keyword id="KW-0812">Transmembrane</keyword>
<keyword id="KW-1133">Transmembrane helix</keyword>
<dbReference type="EMBL" id="AC079374">
    <property type="protein sequence ID" value="AAG40088.1"/>
    <property type="status" value="ALT_SEQ"/>
    <property type="molecule type" value="Genomic_DNA"/>
</dbReference>
<dbReference type="EMBL" id="CP002684">
    <property type="protein sequence ID" value="AEE30595.1"/>
    <property type="molecule type" value="Genomic_DNA"/>
</dbReference>
<dbReference type="EMBL" id="DQ056463">
    <property type="protein sequence ID" value="AAY78620.1"/>
    <property type="molecule type" value="mRNA"/>
</dbReference>
<dbReference type="RefSeq" id="NP_173898.2">
    <property type="nucleotide sequence ID" value="NM_102336.2"/>
</dbReference>
<dbReference type="SMR" id="Q4PT23"/>
<dbReference type="STRING" id="3702.Q4PT23"/>
<dbReference type="TCDB" id="2.A.7.4.2">
    <property type="family name" value="the drug/metabolite transporter (dmt) superfamily"/>
</dbReference>
<dbReference type="PaxDb" id="3702-AT1G25270.1"/>
<dbReference type="EnsemblPlants" id="AT1G25270.1">
    <property type="protein sequence ID" value="AT1G25270.1"/>
    <property type="gene ID" value="AT1G25270"/>
</dbReference>
<dbReference type="GeneID" id="839110"/>
<dbReference type="Gramene" id="AT1G25270.1">
    <property type="protein sequence ID" value="AT1G25270.1"/>
    <property type="gene ID" value="AT1G25270"/>
</dbReference>
<dbReference type="KEGG" id="ath:AT1G25270"/>
<dbReference type="Araport" id="AT1G25270"/>
<dbReference type="TAIR" id="AT1G25270">
    <property type="gene designation" value="UMAMIT24"/>
</dbReference>
<dbReference type="eggNOG" id="ENOG502QR4Y">
    <property type="taxonomic scope" value="Eukaryota"/>
</dbReference>
<dbReference type="HOGENOM" id="CLU_025359_1_0_1"/>
<dbReference type="InParanoid" id="Q4PT23"/>
<dbReference type="OMA" id="IFQRDKR"/>
<dbReference type="PhylomeDB" id="Q4PT23"/>
<dbReference type="PRO" id="PR:Q4PT23"/>
<dbReference type="Proteomes" id="UP000006548">
    <property type="component" value="Chromosome 1"/>
</dbReference>
<dbReference type="ExpressionAtlas" id="Q4PT23">
    <property type="expression patterns" value="baseline and differential"/>
</dbReference>
<dbReference type="GO" id="GO:0016020">
    <property type="term" value="C:membrane"/>
    <property type="evidence" value="ECO:0007669"/>
    <property type="project" value="UniProtKB-SubCell"/>
</dbReference>
<dbReference type="GO" id="GO:0022857">
    <property type="term" value="F:transmembrane transporter activity"/>
    <property type="evidence" value="ECO:0007669"/>
    <property type="project" value="InterPro"/>
</dbReference>
<dbReference type="InterPro" id="IPR000620">
    <property type="entry name" value="EamA_dom"/>
</dbReference>
<dbReference type="InterPro" id="IPR030184">
    <property type="entry name" value="WAT1-related"/>
</dbReference>
<dbReference type="PANTHER" id="PTHR31218">
    <property type="entry name" value="WAT1-RELATED PROTEIN"/>
    <property type="match status" value="1"/>
</dbReference>
<dbReference type="Pfam" id="PF00892">
    <property type="entry name" value="EamA"/>
    <property type="match status" value="2"/>
</dbReference>
<dbReference type="SUPFAM" id="SSF103481">
    <property type="entry name" value="Multidrug resistance efflux transporter EmrE"/>
    <property type="match status" value="2"/>
</dbReference>
<sequence length="355" mass="38576">MKSVVAMVAVQFIFAGMFILFKITVDDGTNLKVLVAYRLSFATIFMLPLALIFQRKKRPEFTWRLLLLAFVSGLLGAAIPNILYLPGMARTSATFSAASSIISPLITLVLGLVFRMETLRLGSNEGRAKLVGTLLGACGALVFVFYKGIEIHIWSTHVDLLKGSHTGRATTNHHVSILGVLMVLGSNVSTSLWLLLQAKIGKELGGLYWNTSLMNGVGSLVCVIIALCSDHDWEQWQLGWDINLLATLYSGIVVSGMVVPLVAWCIATKGPLFVTVFSPIRLVIVALIGSFALEEPLHLGSIIGAMIMVGGVYLVVWCKMKEKKSASTTSDHIETNKNNKELDLGNLSSVNRDVP</sequence>
<reference key="1">
    <citation type="journal article" date="2000" name="Nature">
        <title>Sequence and analysis of chromosome 1 of the plant Arabidopsis thaliana.</title>
        <authorList>
            <person name="Theologis A."/>
            <person name="Ecker J.R."/>
            <person name="Palm C.J."/>
            <person name="Federspiel N.A."/>
            <person name="Kaul S."/>
            <person name="White O."/>
            <person name="Alonso J."/>
            <person name="Altafi H."/>
            <person name="Araujo R."/>
            <person name="Bowman C.L."/>
            <person name="Brooks S.Y."/>
            <person name="Buehler E."/>
            <person name="Chan A."/>
            <person name="Chao Q."/>
            <person name="Chen H."/>
            <person name="Cheuk R.F."/>
            <person name="Chin C.W."/>
            <person name="Chung M.K."/>
            <person name="Conn L."/>
            <person name="Conway A.B."/>
            <person name="Conway A.R."/>
            <person name="Creasy T.H."/>
            <person name="Dewar K."/>
            <person name="Dunn P."/>
            <person name="Etgu P."/>
            <person name="Feldblyum T.V."/>
            <person name="Feng J.-D."/>
            <person name="Fong B."/>
            <person name="Fujii C.Y."/>
            <person name="Gill J.E."/>
            <person name="Goldsmith A.D."/>
            <person name="Haas B."/>
            <person name="Hansen N.F."/>
            <person name="Hughes B."/>
            <person name="Huizar L."/>
            <person name="Hunter J.L."/>
            <person name="Jenkins J."/>
            <person name="Johnson-Hopson C."/>
            <person name="Khan S."/>
            <person name="Khaykin E."/>
            <person name="Kim C.J."/>
            <person name="Koo H.L."/>
            <person name="Kremenetskaia I."/>
            <person name="Kurtz D.B."/>
            <person name="Kwan A."/>
            <person name="Lam B."/>
            <person name="Langin-Hooper S."/>
            <person name="Lee A."/>
            <person name="Lee J.M."/>
            <person name="Lenz C.A."/>
            <person name="Li J.H."/>
            <person name="Li Y.-P."/>
            <person name="Lin X."/>
            <person name="Liu S.X."/>
            <person name="Liu Z.A."/>
            <person name="Luros J.S."/>
            <person name="Maiti R."/>
            <person name="Marziali A."/>
            <person name="Militscher J."/>
            <person name="Miranda M."/>
            <person name="Nguyen M."/>
            <person name="Nierman W.C."/>
            <person name="Osborne B.I."/>
            <person name="Pai G."/>
            <person name="Peterson J."/>
            <person name="Pham P.K."/>
            <person name="Rizzo M."/>
            <person name="Rooney T."/>
            <person name="Rowley D."/>
            <person name="Sakano H."/>
            <person name="Salzberg S.L."/>
            <person name="Schwartz J.R."/>
            <person name="Shinn P."/>
            <person name="Southwick A.M."/>
            <person name="Sun H."/>
            <person name="Tallon L.J."/>
            <person name="Tambunga G."/>
            <person name="Toriumi M.J."/>
            <person name="Town C.D."/>
            <person name="Utterback T."/>
            <person name="Van Aken S."/>
            <person name="Vaysberg M."/>
            <person name="Vysotskaia V.S."/>
            <person name="Walker M."/>
            <person name="Wu D."/>
            <person name="Yu G."/>
            <person name="Fraser C.M."/>
            <person name="Venter J.C."/>
            <person name="Davis R.W."/>
        </authorList>
    </citation>
    <scope>NUCLEOTIDE SEQUENCE [LARGE SCALE GENOMIC DNA]</scope>
    <source>
        <strain>cv. Columbia</strain>
    </source>
</reference>
<reference key="2">
    <citation type="journal article" date="2017" name="Plant J.">
        <title>Araport11: a complete reannotation of the Arabidopsis thaliana reference genome.</title>
        <authorList>
            <person name="Cheng C.Y."/>
            <person name="Krishnakumar V."/>
            <person name="Chan A.P."/>
            <person name="Thibaud-Nissen F."/>
            <person name="Schobel S."/>
            <person name="Town C.D."/>
        </authorList>
    </citation>
    <scope>GENOME REANNOTATION</scope>
    <source>
        <strain>cv. Columbia</strain>
    </source>
</reference>
<reference key="3">
    <citation type="submission" date="2005-05" db="EMBL/GenBank/DDBJ databases">
        <authorList>
            <person name="Underwood B.A."/>
            <person name="Xiao Y.-L."/>
            <person name="Moskal W.A. Jr."/>
            <person name="Monaghan E.L."/>
            <person name="Wang W."/>
            <person name="Redman J.C."/>
            <person name="Wu H.C."/>
            <person name="Utterback T."/>
            <person name="Town C.D."/>
        </authorList>
    </citation>
    <scope>NUCLEOTIDE SEQUENCE [LARGE SCALE MRNA]</scope>
    <source>
        <strain>cv. Columbia</strain>
    </source>
</reference>
<organism>
    <name type="scientific">Arabidopsis thaliana</name>
    <name type="common">Mouse-ear cress</name>
    <dbReference type="NCBI Taxonomy" id="3702"/>
    <lineage>
        <taxon>Eukaryota</taxon>
        <taxon>Viridiplantae</taxon>
        <taxon>Streptophyta</taxon>
        <taxon>Embryophyta</taxon>
        <taxon>Tracheophyta</taxon>
        <taxon>Spermatophyta</taxon>
        <taxon>Magnoliopsida</taxon>
        <taxon>eudicotyledons</taxon>
        <taxon>Gunneridae</taxon>
        <taxon>Pentapetalae</taxon>
        <taxon>rosids</taxon>
        <taxon>malvids</taxon>
        <taxon>Brassicales</taxon>
        <taxon>Brassicaceae</taxon>
        <taxon>Camelineae</taxon>
        <taxon>Arabidopsis</taxon>
    </lineage>
</organism>
<feature type="chain" id="PRO_0000421314" description="WAT1-related protein At1g25270">
    <location>
        <begin position="1"/>
        <end position="355"/>
    </location>
</feature>
<feature type="transmembrane region" description="Helical" evidence="2">
    <location>
        <begin position="4"/>
        <end position="24"/>
    </location>
</feature>
<feature type="transmembrane region" description="Helical" evidence="2">
    <location>
        <begin position="33"/>
        <end position="53"/>
    </location>
</feature>
<feature type="transmembrane region" description="Helical" evidence="2">
    <location>
        <begin position="65"/>
        <end position="85"/>
    </location>
</feature>
<feature type="transmembrane region" description="Helical" evidence="2">
    <location>
        <begin position="94"/>
        <end position="114"/>
    </location>
</feature>
<feature type="transmembrane region" description="Helical" evidence="2">
    <location>
        <begin position="134"/>
        <end position="154"/>
    </location>
</feature>
<feature type="transmembrane region" description="Helical" evidence="2">
    <location>
        <begin position="175"/>
        <end position="195"/>
    </location>
</feature>
<feature type="transmembrane region" description="Helical" evidence="2">
    <location>
        <begin position="207"/>
        <end position="227"/>
    </location>
</feature>
<feature type="transmembrane region" description="Helical" evidence="2">
    <location>
        <begin position="244"/>
        <end position="264"/>
    </location>
</feature>
<feature type="transmembrane region" description="Helical" evidence="2">
    <location>
        <begin position="272"/>
        <end position="292"/>
    </location>
</feature>
<feature type="transmembrane region" description="Helical" evidence="2">
    <location>
        <begin position="297"/>
        <end position="317"/>
    </location>
</feature>
<feature type="domain" description="EamA 1">
    <location>
        <begin position="12"/>
        <end position="142"/>
    </location>
</feature>
<feature type="domain" description="EamA 2">
    <location>
        <begin position="210"/>
        <end position="316"/>
    </location>
</feature>
<accession>Q4PT23</accession>
<accession>Q9FRH6</accession>
<proteinExistence type="evidence at transcript level"/>
<name>WTR6_ARATH</name>